<proteinExistence type="inferred from homology"/>
<feature type="chain" id="PRO_1000086724" description="Large ribosomal subunit protein uL15">
    <location>
        <begin position="1"/>
        <end position="153"/>
    </location>
</feature>
<feature type="region of interest" description="Disordered" evidence="2">
    <location>
        <begin position="21"/>
        <end position="41"/>
    </location>
</feature>
<feature type="compositionally biased region" description="Gly residues" evidence="2">
    <location>
        <begin position="23"/>
        <end position="35"/>
    </location>
</feature>
<gene>
    <name evidence="1" type="primary">rplO</name>
    <name type="ordered locus">RrIowa_1178</name>
</gene>
<sequence>MKLNELYNNIGAKKNKKRIARGIGSGKGKTGGRGIKGQKSRSGVAIKGFEGGQTPMIKRLPKRGFNCISTKKYNIINIYNIEEALADGRLSADDNITKEKLVEARVVNNKNNKKLVKLLSICSDDFAAPLSLKLDAYSAKAKDLIEKAGGKLL</sequence>
<comment type="function">
    <text evidence="1">Binds to the 23S rRNA.</text>
</comment>
<comment type="subunit">
    <text evidence="1">Part of the 50S ribosomal subunit.</text>
</comment>
<comment type="similarity">
    <text evidence="1">Belongs to the universal ribosomal protein uL15 family.</text>
</comment>
<name>RL15_RICRO</name>
<reference key="1">
    <citation type="journal article" date="2008" name="Infect. Immun.">
        <title>Genomic comparison of virulent Rickettsia rickettsii Sheila Smith and avirulent Rickettsia rickettsii Iowa.</title>
        <authorList>
            <person name="Ellison D.W."/>
            <person name="Clark T.R."/>
            <person name="Sturdevant D.E."/>
            <person name="Virtaneva K."/>
            <person name="Porcella S.F."/>
            <person name="Hackstadt T."/>
        </authorList>
    </citation>
    <scope>NUCLEOTIDE SEQUENCE [LARGE SCALE GENOMIC DNA]</scope>
    <source>
        <strain>Iowa</strain>
    </source>
</reference>
<accession>B0BUP1</accession>
<organism>
    <name type="scientific">Rickettsia rickettsii (strain Iowa)</name>
    <dbReference type="NCBI Taxonomy" id="452659"/>
    <lineage>
        <taxon>Bacteria</taxon>
        <taxon>Pseudomonadati</taxon>
        <taxon>Pseudomonadota</taxon>
        <taxon>Alphaproteobacteria</taxon>
        <taxon>Rickettsiales</taxon>
        <taxon>Rickettsiaceae</taxon>
        <taxon>Rickettsieae</taxon>
        <taxon>Rickettsia</taxon>
        <taxon>spotted fever group</taxon>
    </lineage>
</organism>
<evidence type="ECO:0000255" key="1">
    <source>
        <dbReference type="HAMAP-Rule" id="MF_01341"/>
    </source>
</evidence>
<evidence type="ECO:0000256" key="2">
    <source>
        <dbReference type="SAM" id="MobiDB-lite"/>
    </source>
</evidence>
<evidence type="ECO:0000305" key="3"/>
<dbReference type="EMBL" id="CP000766">
    <property type="protein sequence ID" value="ABY72951.1"/>
    <property type="molecule type" value="Genomic_DNA"/>
</dbReference>
<dbReference type="RefSeq" id="WP_012151138.1">
    <property type="nucleotide sequence ID" value="NC_010263.3"/>
</dbReference>
<dbReference type="SMR" id="B0BUP1"/>
<dbReference type="GeneID" id="79937651"/>
<dbReference type="KEGG" id="rrj:RrIowa_1178"/>
<dbReference type="eggNOG" id="COG0200">
    <property type="taxonomic scope" value="Bacteria"/>
</dbReference>
<dbReference type="HOGENOM" id="CLU_055188_4_0_5"/>
<dbReference type="Proteomes" id="UP000000796">
    <property type="component" value="Chromosome"/>
</dbReference>
<dbReference type="GO" id="GO:0015934">
    <property type="term" value="C:large ribosomal subunit"/>
    <property type="evidence" value="ECO:0007669"/>
    <property type="project" value="InterPro"/>
</dbReference>
<dbReference type="GO" id="GO:0019843">
    <property type="term" value="F:rRNA binding"/>
    <property type="evidence" value="ECO:0007669"/>
    <property type="project" value="UniProtKB-UniRule"/>
</dbReference>
<dbReference type="GO" id="GO:0003735">
    <property type="term" value="F:structural constituent of ribosome"/>
    <property type="evidence" value="ECO:0007669"/>
    <property type="project" value="InterPro"/>
</dbReference>
<dbReference type="GO" id="GO:0006412">
    <property type="term" value="P:translation"/>
    <property type="evidence" value="ECO:0007669"/>
    <property type="project" value="UniProtKB-UniRule"/>
</dbReference>
<dbReference type="Gene3D" id="3.100.10.10">
    <property type="match status" value="1"/>
</dbReference>
<dbReference type="HAMAP" id="MF_01341">
    <property type="entry name" value="Ribosomal_uL15"/>
    <property type="match status" value="1"/>
</dbReference>
<dbReference type="InterPro" id="IPR030878">
    <property type="entry name" value="Ribosomal_uL15"/>
</dbReference>
<dbReference type="InterPro" id="IPR021131">
    <property type="entry name" value="Ribosomal_uL15/eL18"/>
</dbReference>
<dbReference type="InterPro" id="IPR036227">
    <property type="entry name" value="Ribosomal_uL15/eL18_sf"/>
</dbReference>
<dbReference type="InterPro" id="IPR005749">
    <property type="entry name" value="Ribosomal_uL15_bac-type"/>
</dbReference>
<dbReference type="NCBIfam" id="TIGR01071">
    <property type="entry name" value="rplO_bact"/>
    <property type="match status" value="1"/>
</dbReference>
<dbReference type="PANTHER" id="PTHR12934">
    <property type="entry name" value="50S RIBOSOMAL PROTEIN L15"/>
    <property type="match status" value="1"/>
</dbReference>
<dbReference type="PANTHER" id="PTHR12934:SF11">
    <property type="entry name" value="LARGE RIBOSOMAL SUBUNIT PROTEIN UL15M"/>
    <property type="match status" value="1"/>
</dbReference>
<dbReference type="Pfam" id="PF00828">
    <property type="entry name" value="Ribosomal_L27A"/>
    <property type="match status" value="1"/>
</dbReference>
<dbReference type="SUPFAM" id="SSF52080">
    <property type="entry name" value="Ribosomal proteins L15p and L18e"/>
    <property type="match status" value="1"/>
</dbReference>
<protein>
    <recommendedName>
        <fullName evidence="1">Large ribosomal subunit protein uL15</fullName>
    </recommendedName>
    <alternativeName>
        <fullName evidence="3">50S ribosomal protein L15</fullName>
    </alternativeName>
</protein>
<keyword id="KW-0687">Ribonucleoprotein</keyword>
<keyword id="KW-0689">Ribosomal protein</keyword>
<keyword id="KW-0694">RNA-binding</keyword>
<keyword id="KW-0699">rRNA-binding</keyword>